<proteinExistence type="evidence at transcript level"/>
<reference key="1">
    <citation type="journal article" date="2006" name="Gene">
        <title>Adaptive selection of mitochondrial complex I subunits during primate radiation.</title>
        <authorList>
            <person name="Mishmar D."/>
            <person name="Ruiz-Pesini E."/>
            <person name="Mondragon-Palomino M."/>
            <person name="Procaccio V."/>
            <person name="Gaut B."/>
            <person name="Wallace D.C."/>
        </authorList>
    </citation>
    <scope>NUCLEOTIDE SEQUENCE [MRNA]</scope>
</reference>
<dbReference type="EMBL" id="DQ885711">
    <property type="protein sequence ID" value="ABH12220.1"/>
    <property type="molecule type" value="mRNA"/>
</dbReference>
<dbReference type="RefSeq" id="NP_001065288.1">
    <property type="nucleotide sequence ID" value="NM_001071820.1"/>
</dbReference>
<dbReference type="RefSeq" id="XP_009428769.1">
    <property type="nucleotide sequence ID" value="XM_009430494.2"/>
</dbReference>
<dbReference type="SMR" id="Q0MQC3"/>
<dbReference type="FunCoup" id="Q0MQC3">
    <property type="interactions" value="2504"/>
</dbReference>
<dbReference type="STRING" id="9598.ENSPTRP00000013471"/>
<dbReference type="PaxDb" id="9598-ENSPTRP00000013471"/>
<dbReference type="Ensembl" id="ENSPTRT00000014540.3">
    <property type="protein sequence ID" value="ENSPTRP00000013471.2"/>
    <property type="gene ID" value="ENSPTRG00000007889.3"/>
</dbReference>
<dbReference type="GeneID" id="744435"/>
<dbReference type="KEGG" id="ptr:744435"/>
<dbReference type="CTD" id="4706"/>
<dbReference type="VGNC" id="VGNC:5848">
    <property type="gene designation" value="NDUFAB1"/>
</dbReference>
<dbReference type="eggNOG" id="KOG1748">
    <property type="taxonomic scope" value="Eukaryota"/>
</dbReference>
<dbReference type="GeneTree" id="ENSGT00390000002127"/>
<dbReference type="HOGENOM" id="CLU_108696_0_1_1"/>
<dbReference type="InParanoid" id="Q0MQC3"/>
<dbReference type="OMA" id="QYCEAPP"/>
<dbReference type="OrthoDB" id="5372at9604"/>
<dbReference type="TreeFam" id="TF314361"/>
<dbReference type="Proteomes" id="UP000002277">
    <property type="component" value="Chromosome 16"/>
</dbReference>
<dbReference type="Bgee" id="ENSPTRG00000007889">
    <property type="expression patterns" value="Expressed in Brodmann (1909) area 10 and 20 other cell types or tissues"/>
</dbReference>
<dbReference type="GO" id="GO:0099128">
    <property type="term" value="C:mitochondrial [2Fe-2S] assembly complex"/>
    <property type="evidence" value="ECO:0007669"/>
    <property type="project" value="Ensembl"/>
</dbReference>
<dbReference type="GO" id="GO:0005743">
    <property type="term" value="C:mitochondrial inner membrane"/>
    <property type="evidence" value="ECO:0007669"/>
    <property type="project" value="Ensembl"/>
</dbReference>
<dbReference type="GO" id="GO:0005739">
    <property type="term" value="C:mitochondrion"/>
    <property type="evidence" value="ECO:0000318"/>
    <property type="project" value="GO_Central"/>
</dbReference>
<dbReference type="GO" id="GO:0005654">
    <property type="term" value="C:nucleoplasm"/>
    <property type="evidence" value="ECO:0007669"/>
    <property type="project" value="Ensembl"/>
</dbReference>
<dbReference type="GO" id="GO:0045271">
    <property type="term" value="C:respiratory chain complex I"/>
    <property type="evidence" value="ECO:0000250"/>
    <property type="project" value="UniProtKB"/>
</dbReference>
<dbReference type="GO" id="GO:0000035">
    <property type="term" value="F:acyl binding"/>
    <property type="evidence" value="ECO:0000318"/>
    <property type="project" value="GO_Central"/>
</dbReference>
<dbReference type="GO" id="GO:0000036">
    <property type="term" value="F:acyl carrier activity"/>
    <property type="evidence" value="ECO:0000318"/>
    <property type="project" value="GO_Central"/>
</dbReference>
<dbReference type="GO" id="GO:0140978">
    <property type="term" value="F:mitochondrial large ribosomal subunit binding"/>
    <property type="evidence" value="ECO:0000250"/>
    <property type="project" value="UniProtKB"/>
</dbReference>
<dbReference type="GO" id="GO:0005198">
    <property type="term" value="F:structural molecule activity"/>
    <property type="evidence" value="ECO:0007669"/>
    <property type="project" value="Ensembl"/>
</dbReference>
<dbReference type="GO" id="GO:0044571">
    <property type="term" value="P:[2Fe-2S] cluster assembly"/>
    <property type="evidence" value="ECO:0000250"/>
    <property type="project" value="UniProtKB"/>
</dbReference>
<dbReference type="FunFam" id="1.10.1200.10:FF:000008">
    <property type="entry name" value="Acyl carrier protein"/>
    <property type="match status" value="1"/>
</dbReference>
<dbReference type="Gene3D" id="1.10.1200.10">
    <property type="entry name" value="ACP-like"/>
    <property type="match status" value="1"/>
</dbReference>
<dbReference type="HAMAP" id="MF_01217">
    <property type="entry name" value="Acyl_carrier"/>
    <property type="match status" value="1"/>
</dbReference>
<dbReference type="InterPro" id="IPR003231">
    <property type="entry name" value="ACP"/>
</dbReference>
<dbReference type="InterPro" id="IPR036736">
    <property type="entry name" value="ACP-like_sf"/>
</dbReference>
<dbReference type="InterPro" id="IPR009081">
    <property type="entry name" value="PP-bd_ACP"/>
</dbReference>
<dbReference type="InterPro" id="IPR006162">
    <property type="entry name" value="Ppantetheine_attach_site"/>
</dbReference>
<dbReference type="NCBIfam" id="TIGR00517">
    <property type="entry name" value="acyl_carrier"/>
    <property type="match status" value="1"/>
</dbReference>
<dbReference type="NCBIfam" id="NF002148">
    <property type="entry name" value="PRK00982.1-2"/>
    <property type="match status" value="1"/>
</dbReference>
<dbReference type="PANTHER" id="PTHR20863">
    <property type="entry name" value="ACYL CARRIER PROTEIN"/>
    <property type="match status" value="1"/>
</dbReference>
<dbReference type="PANTHER" id="PTHR20863:SF28">
    <property type="entry name" value="ACYL CARRIER PROTEIN, MITOCHONDRIAL"/>
    <property type="match status" value="1"/>
</dbReference>
<dbReference type="Pfam" id="PF00550">
    <property type="entry name" value="PP-binding"/>
    <property type="match status" value="1"/>
</dbReference>
<dbReference type="SUPFAM" id="SSF47336">
    <property type="entry name" value="ACP-like"/>
    <property type="match status" value="1"/>
</dbReference>
<dbReference type="PROSITE" id="PS50075">
    <property type="entry name" value="CARRIER"/>
    <property type="match status" value="1"/>
</dbReference>
<dbReference type="PROSITE" id="PS00012">
    <property type="entry name" value="PHOSPHOPANTETHEINE"/>
    <property type="match status" value="1"/>
</dbReference>
<evidence type="ECO:0000250" key="1"/>
<evidence type="ECO:0000250" key="2">
    <source>
        <dbReference type="UniProtKB" id="O14561"/>
    </source>
</evidence>
<evidence type="ECO:0000250" key="3">
    <source>
        <dbReference type="UniProtKB" id="P52505"/>
    </source>
</evidence>
<evidence type="ECO:0000250" key="4">
    <source>
        <dbReference type="UniProtKB" id="Q9CR21"/>
    </source>
</evidence>
<evidence type="ECO:0000250" key="5">
    <source>
        <dbReference type="UniProtKB" id="Q9H1K1"/>
    </source>
</evidence>
<evidence type="ECO:0000255" key="6">
    <source>
        <dbReference type="PROSITE-ProRule" id="PRU00258"/>
    </source>
</evidence>
<evidence type="ECO:0000305" key="7"/>
<name>ACPM_PANTR</name>
<gene>
    <name evidence="2" type="primary">NDUFAB1</name>
</gene>
<keyword id="KW-0007">Acetylation</keyword>
<keyword id="KW-0249">Electron transport</keyword>
<keyword id="KW-0275">Fatty acid biosynthesis</keyword>
<keyword id="KW-0276">Fatty acid metabolism</keyword>
<keyword id="KW-0444">Lipid biosynthesis</keyword>
<keyword id="KW-0443">Lipid metabolism</keyword>
<keyword id="KW-0496">Mitochondrion</keyword>
<keyword id="KW-0596">Phosphopantetheine</keyword>
<keyword id="KW-0597">Phosphoprotein</keyword>
<keyword id="KW-1185">Reference proteome</keyword>
<keyword id="KW-0679">Respiratory chain</keyword>
<keyword id="KW-0809">Transit peptide</keyword>
<keyword id="KW-0813">Transport</keyword>
<feature type="transit peptide" description="Mitochondrion" evidence="1">
    <location>
        <begin position="1"/>
        <end position="68"/>
    </location>
</feature>
<feature type="chain" id="PRO_0000251162" description="Acyl carrier protein, mitochondrial">
    <location>
        <begin position="69"/>
        <end position="156"/>
    </location>
</feature>
<feature type="domain" description="Carrier" evidence="6">
    <location>
        <begin position="77"/>
        <end position="152"/>
    </location>
</feature>
<feature type="modified residue" description="N6-acetyllysine" evidence="4">
    <location>
        <position position="88"/>
    </location>
</feature>
<feature type="modified residue" description="O-(pantetheine 4'-phosphoryl)serine" evidence="6">
    <location>
        <position position="112"/>
    </location>
</feature>
<accession>Q0MQC3</accession>
<sequence>MASRVLSAYVSRLPAAFAPLPRVRMLAVARPLSTALCSAGTQTRLGTLQPALVLAQVPGRVTQLCRQYSDMPPLTLEGIQDRVLYVLKLYDKIDPEKLSVNSHFMKDLGLDSLDQVEIIMAMEDEFGFEIPDIDAEKLMCPQEIVDYIADKKDVYE</sequence>
<protein>
    <recommendedName>
        <fullName evidence="2">Acyl carrier protein, mitochondrial</fullName>
        <shortName>ACP</shortName>
    </recommendedName>
    <alternativeName>
        <fullName>NADH-ubiquinone oxidoreductase 9.6 kDa subunit</fullName>
    </alternativeName>
</protein>
<organism>
    <name type="scientific">Pan troglodytes</name>
    <name type="common">Chimpanzee</name>
    <dbReference type="NCBI Taxonomy" id="9598"/>
    <lineage>
        <taxon>Eukaryota</taxon>
        <taxon>Metazoa</taxon>
        <taxon>Chordata</taxon>
        <taxon>Craniata</taxon>
        <taxon>Vertebrata</taxon>
        <taxon>Euteleostomi</taxon>
        <taxon>Mammalia</taxon>
        <taxon>Eutheria</taxon>
        <taxon>Euarchontoglires</taxon>
        <taxon>Primates</taxon>
        <taxon>Haplorrhini</taxon>
        <taxon>Catarrhini</taxon>
        <taxon>Hominidae</taxon>
        <taxon>Pan</taxon>
    </lineage>
</organism>
<comment type="function">
    <text evidence="2 3 5">Carrier of the growing fatty acid chain in fatty acid biosynthesis (By similarity). Accessory and non-catalytic subunit of the mitochondrial membrane respiratory chain NADH dehydrogenase (Complex I), which functions in the transfer of electrons from NADH to the respiratory chain. Accessory protein, of the core iron-sulfur cluster (ISC) assembly complex, that regulates, in association with LYRM4, the stability and the cysteine desulfurase activity of NFS1 and participates in the [2Fe-2S] clusters assembly on the scaffolding protein ISCU (By similarity). The core iron-sulfur cluster (ISC) assembly complex is involved in the de novo synthesis of a [2Fe-2S] cluster, the first step of the mitochondrial iron-sulfur protein biogenesis. This process is initiated by the cysteine desulfurase complex (NFS1:LYRM4:NDUFAB1) that produces persulfide which is delivered on the scaffold protein ISCU in a FXN-dependent manner. Then this complex is stabilized by FDX2 which provides reducing equivalents to accomplish the [2Fe-2S] cluster assembly. Finally, the [2Fe-2S] cluster is transferred from ISCU to chaperone proteins, including HSCB, HSPA9 and GLRX5 (By similarity).</text>
</comment>
<comment type="subunit">
    <text evidence="2">Mammalian complex I is composed of 45 different subunits. Interacts with ETFRF1. Identified in a complex composed of MALSU1, MIEF1 upstream open reading frame protein and NDUFAB1; within the trimeric complex, MIEF1 upstream open reading frame protein functions as a bridging scaffold that interacts with MALSU1 on one side, and with NDUFAB1 on the other side. The complex interacts with the mitochondrial large ribosomal subunit. Interacts with alpha-1-microglobulin chain; this interaction is required for the maintenance of mitochondrial redox homeostasis. Component of the mitochondrial core iron-sulfur cluster (ISC) complex composed of NFS1, LYRM4, NDUFAB1, ISCU, FXN, and FDX2; this complex is a heterohexamer containing two copies of each monomer. Component of the cyteine desulfurase complex composed of NFS1, LYRM4 and NDUFAB1; this complex contributes to the stability and cysteine desulfurase activity of NFS1.</text>
</comment>
<comment type="subcellular location">
    <subcellularLocation>
        <location evidence="2">Mitochondrion</location>
    </subcellularLocation>
</comment>
<comment type="PTM">
    <text evidence="3">Phosphopantetheinylation at Ser-112 is essential for interactions with LYR motif-containing proteins.</text>
</comment>
<comment type="similarity">
    <text evidence="7">Belongs to the acyl carrier protein (ACP) family.</text>
</comment>